<feature type="chain" id="PRO_0000212735" description="Probable disease resistance protein At1g15890">
    <location>
        <begin position="1"/>
        <end position="851"/>
    </location>
</feature>
<feature type="domain" description="NB-ARC">
    <location>
        <begin position="139"/>
        <end position="441"/>
    </location>
</feature>
<feature type="repeat" description="LRR 1">
    <location>
        <begin position="514"/>
        <end position="535"/>
    </location>
</feature>
<feature type="repeat" description="LRR 2">
    <location>
        <begin position="536"/>
        <end position="557"/>
    </location>
</feature>
<feature type="repeat" description="LRR 3">
    <location>
        <begin position="560"/>
        <end position="582"/>
    </location>
</feature>
<feature type="repeat" description="LRR 4">
    <location>
        <begin position="584"/>
        <end position="605"/>
    </location>
</feature>
<feature type="repeat" description="LRR 5">
    <location>
        <begin position="607"/>
        <end position="629"/>
    </location>
</feature>
<feature type="binding site" evidence="2">
    <location>
        <begin position="181"/>
        <end position="188"/>
    </location>
    <ligand>
        <name>ATP</name>
        <dbReference type="ChEBI" id="CHEBI:30616"/>
    </ligand>
</feature>
<comment type="function">
    <text evidence="1">Probable disease resistance protein.</text>
</comment>
<comment type="domain">
    <text evidence="1">The LRR repeats probably act as specificity determinant of pathogen recognition.</text>
</comment>
<comment type="similarity">
    <text evidence="3">Belongs to the disease resistance NB-LRR family.</text>
</comment>
<comment type="sequence caution" evidence="3">
    <conflict type="erroneous gene model prediction">
        <sequence resource="EMBL-CDS" id="AAF82158"/>
    </conflict>
</comment>
<comment type="online information" name="NIB-LRRS">
    <link uri="http://niblrrs.ucdavis.edu"/>
    <text>Functional and comparative genomics of disease resistance gene homologs</text>
</comment>
<name>DRL3_ARATH</name>
<protein>
    <recommendedName>
        <fullName>Probable disease resistance protein At1g15890</fullName>
    </recommendedName>
</protein>
<reference key="1">
    <citation type="journal article" date="2000" name="Nature">
        <title>Sequence and analysis of chromosome 1 of the plant Arabidopsis thaliana.</title>
        <authorList>
            <person name="Theologis A."/>
            <person name="Ecker J.R."/>
            <person name="Palm C.J."/>
            <person name="Federspiel N.A."/>
            <person name="Kaul S."/>
            <person name="White O."/>
            <person name="Alonso J."/>
            <person name="Altafi H."/>
            <person name="Araujo R."/>
            <person name="Bowman C.L."/>
            <person name="Brooks S.Y."/>
            <person name="Buehler E."/>
            <person name="Chan A."/>
            <person name="Chao Q."/>
            <person name="Chen H."/>
            <person name="Cheuk R.F."/>
            <person name="Chin C.W."/>
            <person name="Chung M.K."/>
            <person name="Conn L."/>
            <person name="Conway A.B."/>
            <person name="Conway A.R."/>
            <person name="Creasy T.H."/>
            <person name="Dewar K."/>
            <person name="Dunn P."/>
            <person name="Etgu P."/>
            <person name="Feldblyum T.V."/>
            <person name="Feng J.-D."/>
            <person name="Fong B."/>
            <person name="Fujii C.Y."/>
            <person name="Gill J.E."/>
            <person name="Goldsmith A.D."/>
            <person name="Haas B."/>
            <person name="Hansen N.F."/>
            <person name="Hughes B."/>
            <person name="Huizar L."/>
            <person name="Hunter J.L."/>
            <person name="Jenkins J."/>
            <person name="Johnson-Hopson C."/>
            <person name="Khan S."/>
            <person name="Khaykin E."/>
            <person name="Kim C.J."/>
            <person name="Koo H.L."/>
            <person name="Kremenetskaia I."/>
            <person name="Kurtz D.B."/>
            <person name="Kwan A."/>
            <person name="Lam B."/>
            <person name="Langin-Hooper S."/>
            <person name="Lee A."/>
            <person name="Lee J.M."/>
            <person name="Lenz C.A."/>
            <person name="Li J.H."/>
            <person name="Li Y.-P."/>
            <person name="Lin X."/>
            <person name="Liu S.X."/>
            <person name="Liu Z.A."/>
            <person name="Luros J.S."/>
            <person name="Maiti R."/>
            <person name="Marziali A."/>
            <person name="Militscher J."/>
            <person name="Miranda M."/>
            <person name="Nguyen M."/>
            <person name="Nierman W.C."/>
            <person name="Osborne B.I."/>
            <person name="Pai G."/>
            <person name="Peterson J."/>
            <person name="Pham P.K."/>
            <person name="Rizzo M."/>
            <person name="Rooney T."/>
            <person name="Rowley D."/>
            <person name="Sakano H."/>
            <person name="Salzberg S.L."/>
            <person name="Schwartz J.R."/>
            <person name="Shinn P."/>
            <person name="Southwick A.M."/>
            <person name="Sun H."/>
            <person name="Tallon L.J."/>
            <person name="Tambunga G."/>
            <person name="Toriumi M.J."/>
            <person name="Town C.D."/>
            <person name="Utterback T."/>
            <person name="Van Aken S."/>
            <person name="Vaysberg M."/>
            <person name="Vysotskaia V.S."/>
            <person name="Walker M."/>
            <person name="Wu D."/>
            <person name="Yu G."/>
            <person name="Fraser C.M."/>
            <person name="Venter J.C."/>
            <person name="Davis R.W."/>
        </authorList>
    </citation>
    <scope>NUCLEOTIDE SEQUENCE [LARGE SCALE GENOMIC DNA]</scope>
    <source>
        <strain>cv. Columbia</strain>
    </source>
</reference>
<reference key="2">
    <citation type="journal article" date="2017" name="Plant J.">
        <title>Araport11: a complete reannotation of the Arabidopsis thaliana reference genome.</title>
        <authorList>
            <person name="Cheng C.Y."/>
            <person name="Krishnakumar V."/>
            <person name="Chan A.P."/>
            <person name="Thibaud-Nissen F."/>
            <person name="Schobel S."/>
            <person name="Town C.D."/>
        </authorList>
    </citation>
    <scope>GENOME REANNOTATION</scope>
    <source>
        <strain>cv. Columbia</strain>
    </source>
</reference>
<gene>
    <name type="ordered locus">At1g15890</name>
    <name type="ORF">F7H2.22</name>
</gene>
<sequence length="851" mass="95845">MGNCVALEISCDQTLNHACGCLFGDRNYILKMEANLEALQNTMQELEERRDDLLRRVVIEEDKGLQRLAQVQGWLSRVKDVCSQVNDLLKAKSIQTERLCLCGYCSKNFISGRNYGINVLKKLKHVEGLLAKGVFEVVAEKIPAPKVEKKHIQTTVGLDAMVGRAWNSLMKDERRTLGLYGMGGVGKTTLLASINNKFLEGMNGFDLVIWVVVSKDLQNEGIQEQILGRLGLHRGWKQVTEKEKASYICNILNVKKFVLLLDDLWSEVDLEKIGVPPLTRENGSKIVFTTRSKDVCRDMEVDGEMKVDCLPPDEAWELFQKKVGPIPLQSHEDIPTLARKVAEKCCGLPLALSVIGKAMASRETVQEWQHVIHVLNSSSHEFPSMEEKILPVLKFSYDDLKDEKVKLCFLYCSLFPEDYEVRKEELIEYWMCEGFIDGNEDEDGANNKGHDIIGSLVRAHLLMDGELTTKVKMHDVIREMALWIASNFGKQKETLCVKPGVQLCHIPKDINWESLRRMSLMCNQIANISSSSNSPNLSTLLLQNNKLVHISCDFFRFMPALVVLDLSRNSSLSSLPEAISKLGSLQYINLSTTGIKWLPVSFKELKKLIHLNLEFTDELESIVGIATSLPNLQVLKLFSSRVCIDGSLMEELLLLEHLKVLTATIKDALILESIQGVDRLVSSIQALCLRNMSAPVIILNTVALGGLQHLEIVGSKISEIKIDWERKGRGELKCTSSPGFKHLSVVEIFNLEGPRDLTWLLFAQNLRRLSVTLSLTIEEIINKEKGMSITNVHPNIVVPFGKLEFLEVRGLDELKRICWNPPALPNLRQFDVRSCLKLPEAATEFPRHANE</sequence>
<organism>
    <name type="scientific">Arabidopsis thaliana</name>
    <name type="common">Mouse-ear cress</name>
    <dbReference type="NCBI Taxonomy" id="3702"/>
    <lineage>
        <taxon>Eukaryota</taxon>
        <taxon>Viridiplantae</taxon>
        <taxon>Streptophyta</taxon>
        <taxon>Embryophyta</taxon>
        <taxon>Tracheophyta</taxon>
        <taxon>Spermatophyta</taxon>
        <taxon>Magnoliopsida</taxon>
        <taxon>eudicotyledons</taxon>
        <taxon>Gunneridae</taxon>
        <taxon>Pentapetalae</taxon>
        <taxon>rosids</taxon>
        <taxon>malvids</taxon>
        <taxon>Brassicales</taxon>
        <taxon>Brassicaceae</taxon>
        <taxon>Camelineae</taxon>
        <taxon>Arabidopsis</taxon>
    </lineage>
</organism>
<evidence type="ECO:0000250" key="1"/>
<evidence type="ECO:0000255" key="2"/>
<evidence type="ECO:0000305" key="3"/>
<accession>Q9LMP6</accession>
<accession>F4I187</accession>
<keyword id="KW-0067">ATP-binding</keyword>
<keyword id="KW-0433">Leucine-rich repeat</keyword>
<keyword id="KW-0547">Nucleotide-binding</keyword>
<keyword id="KW-0611">Plant defense</keyword>
<keyword id="KW-1185">Reference proteome</keyword>
<keyword id="KW-0677">Repeat</keyword>
<dbReference type="EMBL" id="AC034256">
    <property type="protein sequence ID" value="AAF82158.1"/>
    <property type="status" value="ALT_SEQ"/>
    <property type="molecule type" value="Genomic_DNA"/>
</dbReference>
<dbReference type="EMBL" id="CP002684">
    <property type="protein sequence ID" value="AEE29380.1"/>
    <property type="molecule type" value="Genomic_DNA"/>
</dbReference>
<dbReference type="PIR" id="D86293">
    <property type="entry name" value="D86293"/>
</dbReference>
<dbReference type="RefSeq" id="NP_173041.1">
    <property type="nucleotide sequence ID" value="NM_101457.3"/>
</dbReference>
<dbReference type="SMR" id="Q9LMP6"/>
<dbReference type="BioGRID" id="23399">
    <property type="interactions" value="1"/>
</dbReference>
<dbReference type="FunCoup" id="Q9LMP6">
    <property type="interactions" value="21"/>
</dbReference>
<dbReference type="STRING" id="3702.Q9LMP6"/>
<dbReference type="PaxDb" id="3702-AT1G15890.1"/>
<dbReference type="ProteomicsDB" id="224338"/>
<dbReference type="EnsemblPlants" id="AT1G15890.1">
    <property type="protein sequence ID" value="AT1G15890.1"/>
    <property type="gene ID" value="AT1G15890"/>
</dbReference>
<dbReference type="GeneID" id="838159"/>
<dbReference type="Gramene" id="AT1G15890.1">
    <property type="protein sequence ID" value="AT1G15890.1"/>
    <property type="gene ID" value="AT1G15890"/>
</dbReference>
<dbReference type="KEGG" id="ath:AT1G15890"/>
<dbReference type="Araport" id="AT1G15890"/>
<dbReference type="TAIR" id="AT1G15890"/>
<dbReference type="eggNOG" id="KOG4658">
    <property type="taxonomic scope" value="Eukaryota"/>
</dbReference>
<dbReference type="HOGENOM" id="CLU_000427_4_0_1"/>
<dbReference type="InParanoid" id="Q9LMP6"/>
<dbReference type="OMA" id="PRELICK"/>
<dbReference type="PRO" id="PR:Q9LMP6"/>
<dbReference type="Proteomes" id="UP000006548">
    <property type="component" value="Chromosome 1"/>
</dbReference>
<dbReference type="ExpressionAtlas" id="Q9LMP6">
    <property type="expression patterns" value="baseline and differential"/>
</dbReference>
<dbReference type="GO" id="GO:0043531">
    <property type="term" value="F:ADP binding"/>
    <property type="evidence" value="ECO:0007669"/>
    <property type="project" value="InterPro"/>
</dbReference>
<dbReference type="GO" id="GO:0005524">
    <property type="term" value="F:ATP binding"/>
    <property type="evidence" value="ECO:0007669"/>
    <property type="project" value="UniProtKB-KW"/>
</dbReference>
<dbReference type="GO" id="GO:0006952">
    <property type="term" value="P:defense response"/>
    <property type="evidence" value="ECO:0007669"/>
    <property type="project" value="UniProtKB-KW"/>
</dbReference>
<dbReference type="FunFam" id="3.80.10.10:FF:000834">
    <property type="entry name" value="Probable disease resistance protein At1g15890"/>
    <property type="match status" value="1"/>
</dbReference>
<dbReference type="FunFam" id="3.40.50.300:FF:001091">
    <property type="entry name" value="Probable disease resistance protein At1g61300"/>
    <property type="match status" value="1"/>
</dbReference>
<dbReference type="FunFam" id="1.10.10.10:FF:000322">
    <property type="entry name" value="Probable disease resistance protein At1g63360"/>
    <property type="match status" value="1"/>
</dbReference>
<dbReference type="FunFam" id="1.10.8.430:FF:000003">
    <property type="entry name" value="Probable disease resistance protein At5g66910"/>
    <property type="match status" value="1"/>
</dbReference>
<dbReference type="Gene3D" id="1.10.8.430">
    <property type="entry name" value="Helical domain of apoptotic protease-activating factors"/>
    <property type="match status" value="1"/>
</dbReference>
<dbReference type="Gene3D" id="3.40.50.300">
    <property type="entry name" value="P-loop containing nucleotide triphosphate hydrolases"/>
    <property type="match status" value="1"/>
</dbReference>
<dbReference type="Gene3D" id="3.80.10.10">
    <property type="entry name" value="Ribonuclease Inhibitor"/>
    <property type="match status" value="1"/>
</dbReference>
<dbReference type="Gene3D" id="1.10.10.10">
    <property type="entry name" value="Winged helix-like DNA-binding domain superfamily/Winged helix DNA-binding domain"/>
    <property type="match status" value="1"/>
</dbReference>
<dbReference type="InterPro" id="IPR042197">
    <property type="entry name" value="Apaf_helical"/>
</dbReference>
<dbReference type="InterPro" id="IPR001611">
    <property type="entry name" value="Leu-rich_rpt"/>
</dbReference>
<dbReference type="InterPro" id="IPR032675">
    <property type="entry name" value="LRR_dom_sf"/>
</dbReference>
<dbReference type="InterPro" id="IPR002182">
    <property type="entry name" value="NB-ARC"/>
</dbReference>
<dbReference type="InterPro" id="IPR027417">
    <property type="entry name" value="P-loop_NTPase"/>
</dbReference>
<dbReference type="InterPro" id="IPR050905">
    <property type="entry name" value="Plant_NBS-LRR"/>
</dbReference>
<dbReference type="InterPro" id="IPR036388">
    <property type="entry name" value="WH-like_DNA-bd_sf"/>
</dbReference>
<dbReference type="PANTHER" id="PTHR33463:SF220">
    <property type="entry name" value="NB-ARC DOMAIN-CONTAINING PROTEIN"/>
    <property type="match status" value="1"/>
</dbReference>
<dbReference type="PANTHER" id="PTHR33463">
    <property type="entry name" value="NB-ARC DOMAIN-CONTAINING PROTEIN-RELATED"/>
    <property type="match status" value="1"/>
</dbReference>
<dbReference type="Pfam" id="PF13855">
    <property type="entry name" value="LRR_8"/>
    <property type="match status" value="1"/>
</dbReference>
<dbReference type="Pfam" id="PF00931">
    <property type="entry name" value="NB-ARC"/>
    <property type="match status" value="1"/>
</dbReference>
<dbReference type="Pfam" id="PF23559">
    <property type="entry name" value="WH_DRP"/>
    <property type="match status" value="1"/>
</dbReference>
<dbReference type="PRINTS" id="PR00364">
    <property type="entry name" value="DISEASERSIST"/>
</dbReference>
<dbReference type="SUPFAM" id="SSF52058">
    <property type="entry name" value="L domain-like"/>
    <property type="match status" value="1"/>
</dbReference>
<dbReference type="SUPFAM" id="SSF52540">
    <property type="entry name" value="P-loop containing nucleoside triphosphate hydrolases"/>
    <property type="match status" value="1"/>
</dbReference>
<proteinExistence type="inferred from homology"/>